<proteinExistence type="inferred from homology"/>
<sequence>MTQDELKKAVGWAALQYVQPGTIVGVGTGSTAAHFIDALGTMKGQIEGAVSSSDASTEKLKSLGIHVFDLNEVDSLGIYVDGADEINGHMQMIKGGGAALTREKIIASVAEKFICIADASKQVDILGKFPLPVEVIPMARSAVARQLVKLGGRPEYRQGVVTDNGNVILDVHGMEILDPIAMENAINAIPGVVTVGLFANRGADVALIGTPDGVKTIVK</sequence>
<accession>B5YQA8</accession>
<protein>
    <recommendedName>
        <fullName evidence="1">Ribose-5-phosphate isomerase A</fullName>
        <ecNumber evidence="1">5.3.1.6</ecNumber>
    </recommendedName>
    <alternativeName>
        <fullName evidence="1">Phosphoriboisomerase A</fullName>
        <shortName evidence="1">PRI</shortName>
    </alternativeName>
</protein>
<comment type="function">
    <text evidence="1">Catalyzes the reversible conversion of ribose-5-phosphate to ribulose 5-phosphate.</text>
</comment>
<comment type="catalytic activity">
    <reaction evidence="1">
        <text>aldehydo-D-ribose 5-phosphate = D-ribulose 5-phosphate</text>
        <dbReference type="Rhea" id="RHEA:14657"/>
        <dbReference type="ChEBI" id="CHEBI:58121"/>
        <dbReference type="ChEBI" id="CHEBI:58273"/>
        <dbReference type="EC" id="5.3.1.6"/>
    </reaction>
</comment>
<comment type="pathway">
    <text evidence="1">Carbohydrate degradation; pentose phosphate pathway; D-ribose 5-phosphate from D-ribulose 5-phosphate (non-oxidative stage): step 1/1.</text>
</comment>
<comment type="subunit">
    <text evidence="1">Homodimer.</text>
</comment>
<comment type="similarity">
    <text evidence="1">Belongs to the ribose 5-phosphate isomerase family.</text>
</comment>
<name>RPIA_ECO5E</name>
<gene>
    <name evidence="1" type="primary">rpiA</name>
    <name type="ordered locus">ECH74115_4210</name>
</gene>
<feature type="chain" id="PRO_1000097660" description="Ribose-5-phosphate isomerase A">
    <location>
        <begin position="1"/>
        <end position="219"/>
    </location>
</feature>
<feature type="active site" description="Proton acceptor" evidence="1">
    <location>
        <position position="103"/>
    </location>
</feature>
<feature type="binding site" evidence="1">
    <location>
        <begin position="28"/>
        <end position="31"/>
    </location>
    <ligand>
        <name>substrate</name>
    </ligand>
</feature>
<feature type="binding site" evidence="1">
    <location>
        <begin position="81"/>
        <end position="84"/>
    </location>
    <ligand>
        <name>substrate</name>
    </ligand>
</feature>
<feature type="binding site" evidence="1">
    <location>
        <begin position="94"/>
        <end position="97"/>
    </location>
    <ligand>
        <name>substrate</name>
    </ligand>
</feature>
<feature type="binding site" evidence="1">
    <location>
        <position position="121"/>
    </location>
    <ligand>
        <name>substrate</name>
    </ligand>
</feature>
<organism>
    <name type="scientific">Escherichia coli O157:H7 (strain EC4115 / EHEC)</name>
    <dbReference type="NCBI Taxonomy" id="444450"/>
    <lineage>
        <taxon>Bacteria</taxon>
        <taxon>Pseudomonadati</taxon>
        <taxon>Pseudomonadota</taxon>
        <taxon>Gammaproteobacteria</taxon>
        <taxon>Enterobacterales</taxon>
        <taxon>Enterobacteriaceae</taxon>
        <taxon>Escherichia</taxon>
    </lineage>
</organism>
<keyword id="KW-0413">Isomerase</keyword>
<dbReference type="EC" id="5.3.1.6" evidence="1"/>
<dbReference type="EMBL" id="CP001164">
    <property type="protein sequence ID" value="ACI38592.1"/>
    <property type="molecule type" value="Genomic_DNA"/>
</dbReference>
<dbReference type="RefSeq" id="WP_000189743.1">
    <property type="nucleotide sequence ID" value="NC_011353.1"/>
</dbReference>
<dbReference type="SMR" id="B5YQA8"/>
<dbReference type="GeneID" id="93779085"/>
<dbReference type="KEGG" id="ecf:ECH74115_4210"/>
<dbReference type="HOGENOM" id="CLU_056590_1_1_6"/>
<dbReference type="UniPathway" id="UPA00115">
    <property type="reaction ID" value="UER00412"/>
</dbReference>
<dbReference type="GO" id="GO:0005829">
    <property type="term" value="C:cytosol"/>
    <property type="evidence" value="ECO:0007669"/>
    <property type="project" value="TreeGrafter"/>
</dbReference>
<dbReference type="GO" id="GO:0004751">
    <property type="term" value="F:ribose-5-phosphate isomerase activity"/>
    <property type="evidence" value="ECO:0007669"/>
    <property type="project" value="UniProtKB-UniRule"/>
</dbReference>
<dbReference type="GO" id="GO:0006014">
    <property type="term" value="P:D-ribose metabolic process"/>
    <property type="evidence" value="ECO:0007669"/>
    <property type="project" value="TreeGrafter"/>
</dbReference>
<dbReference type="GO" id="GO:0009052">
    <property type="term" value="P:pentose-phosphate shunt, non-oxidative branch"/>
    <property type="evidence" value="ECO:0007669"/>
    <property type="project" value="UniProtKB-UniRule"/>
</dbReference>
<dbReference type="CDD" id="cd01398">
    <property type="entry name" value="RPI_A"/>
    <property type="match status" value="1"/>
</dbReference>
<dbReference type="FunFam" id="3.30.70.260:FF:000004">
    <property type="entry name" value="Ribose-5-phosphate isomerase A"/>
    <property type="match status" value="1"/>
</dbReference>
<dbReference type="FunFam" id="3.40.50.1360:FF:000001">
    <property type="entry name" value="Ribose-5-phosphate isomerase A"/>
    <property type="match status" value="1"/>
</dbReference>
<dbReference type="Gene3D" id="3.30.70.260">
    <property type="match status" value="1"/>
</dbReference>
<dbReference type="Gene3D" id="3.40.50.1360">
    <property type="match status" value="1"/>
</dbReference>
<dbReference type="HAMAP" id="MF_00170">
    <property type="entry name" value="Rib_5P_isom_A"/>
    <property type="match status" value="1"/>
</dbReference>
<dbReference type="InterPro" id="IPR037171">
    <property type="entry name" value="NagB/RpiA_transferase-like"/>
</dbReference>
<dbReference type="InterPro" id="IPR020672">
    <property type="entry name" value="Ribose5P_isomerase_typA_subgr"/>
</dbReference>
<dbReference type="InterPro" id="IPR004788">
    <property type="entry name" value="Ribose5P_isomerase_type_A"/>
</dbReference>
<dbReference type="NCBIfam" id="NF001924">
    <property type="entry name" value="PRK00702.1"/>
    <property type="match status" value="1"/>
</dbReference>
<dbReference type="NCBIfam" id="TIGR00021">
    <property type="entry name" value="rpiA"/>
    <property type="match status" value="1"/>
</dbReference>
<dbReference type="PANTHER" id="PTHR11934">
    <property type="entry name" value="RIBOSE-5-PHOSPHATE ISOMERASE"/>
    <property type="match status" value="1"/>
</dbReference>
<dbReference type="PANTHER" id="PTHR11934:SF0">
    <property type="entry name" value="RIBOSE-5-PHOSPHATE ISOMERASE"/>
    <property type="match status" value="1"/>
</dbReference>
<dbReference type="Pfam" id="PF06026">
    <property type="entry name" value="Rib_5-P_isom_A"/>
    <property type="match status" value="1"/>
</dbReference>
<dbReference type="SUPFAM" id="SSF75445">
    <property type="entry name" value="D-ribose-5-phosphate isomerase (RpiA), lid domain"/>
    <property type="match status" value="1"/>
</dbReference>
<dbReference type="SUPFAM" id="SSF100950">
    <property type="entry name" value="NagB/RpiA/CoA transferase-like"/>
    <property type="match status" value="1"/>
</dbReference>
<evidence type="ECO:0000255" key="1">
    <source>
        <dbReference type="HAMAP-Rule" id="MF_00170"/>
    </source>
</evidence>
<reference key="1">
    <citation type="journal article" date="2011" name="Proc. Natl. Acad. Sci. U.S.A.">
        <title>Genomic anatomy of Escherichia coli O157:H7 outbreaks.</title>
        <authorList>
            <person name="Eppinger M."/>
            <person name="Mammel M.K."/>
            <person name="Leclerc J.E."/>
            <person name="Ravel J."/>
            <person name="Cebula T.A."/>
        </authorList>
    </citation>
    <scope>NUCLEOTIDE SEQUENCE [LARGE SCALE GENOMIC DNA]</scope>
    <source>
        <strain>EC4115 / EHEC</strain>
    </source>
</reference>